<gene>
    <name type="primary">SODA</name>
    <name type="synonym">RMSOD1</name>
    <name type="synonym">SODAOS1</name>
    <name type="ordered locus">Os05g0323900</name>
    <name type="ordered locus">LOC_Os05g25850</name>
    <name type="ORF">OsJ_18067</name>
    <name type="ORF">P0018A03</name>
</gene>
<proteinExistence type="evidence at transcript level"/>
<feature type="transit peptide" description="Mitochondrion" evidence="1">
    <location>
        <begin position="1"/>
        <end position="27"/>
    </location>
</feature>
<feature type="chain" id="PRO_0000032900" description="Superoxide dismutase [Mn], mitochondrial">
    <location>
        <begin position="28"/>
        <end position="231"/>
    </location>
</feature>
<feature type="binding site" evidence="1">
    <location>
        <position position="55"/>
    </location>
    <ligand>
        <name>Mn(2+)</name>
        <dbReference type="ChEBI" id="CHEBI:29035"/>
    </ligand>
</feature>
<feature type="binding site" evidence="1">
    <location>
        <position position="103"/>
    </location>
    <ligand>
        <name>Mn(2+)</name>
        <dbReference type="ChEBI" id="CHEBI:29035"/>
    </ligand>
</feature>
<feature type="binding site" evidence="1">
    <location>
        <position position="192"/>
    </location>
    <ligand>
        <name>Mn(2+)</name>
        <dbReference type="ChEBI" id="CHEBI:29035"/>
    </ligand>
</feature>
<feature type="binding site" evidence="1">
    <location>
        <position position="196"/>
    </location>
    <ligand>
        <name>Mn(2+)</name>
        <dbReference type="ChEBI" id="CHEBI:29035"/>
    </ligand>
</feature>
<feature type="sequence conflict" description="In Ref. 3; AAA57130." evidence="2" ref="3">
    <original>Y</original>
    <variation>I</variation>
    <location>
        <position position="226"/>
    </location>
</feature>
<sequence>MALRTLASRKTLAAAALPLAAAAAARGVTTVALPDLPYDYGALEPAISGEIMRLHHQKHHATYVANYNKALEQLDAAVAKGDAPAIVHLQSAIKFNGGGHVNHSIFWNNLKPISEGGGDPPHAKLGWAIDEDFGSFEALVKKMSAEGAALQGSGWVWLALDKEAKKLSVETTANQDPLVTKGANLVPLLGIDVWEHAYYLQYKNVRPDYLSNIWKVMNWKYAGEVYENATA</sequence>
<keyword id="KW-0464">Manganese</keyword>
<keyword id="KW-0479">Metal-binding</keyword>
<keyword id="KW-0496">Mitochondrion</keyword>
<keyword id="KW-0560">Oxidoreductase</keyword>
<keyword id="KW-1185">Reference proteome</keyword>
<keyword id="KW-0809">Transit peptide</keyword>
<accession>Q43008</accession>
<accession>A0A0P0WKM7</accession>
<accession>Q0DJ64</accession>
<accession>Q43121</accession>
<accession>Q7GCN0</accession>
<organism>
    <name type="scientific">Oryza sativa subsp. japonica</name>
    <name type="common">Rice</name>
    <dbReference type="NCBI Taxonomy" id="39947"/>
    <lineage>
        <taxon>Eukaryota</taxon>
        <taxon>Viridiplantae</taxon>
        <taxon>Streptophyta</taxon>
        <taxon>Embryophyta</taxon>
        <taxon>Tracheophyta</taxon>
        <taxon>Spermatophyta</taxon>
        <taxon>Magnoliopsida</taxon>
        <taxon>Liliopsida</taxon>
        <taxon>Poales</taxon>
        <taxon>Poaceae</taxon>
        <taxon>BOP clade</taxon>
        <taxon>Oryzoideae</taxon>
        <taxon>Oryzeae</taxon>
        <taxon>Oryzinae</taxon>
        <taxon>Oryza</taxon>
        <taxon>Oryza sativa</taxon>
    </lineage>
</organism>
<name>SODM_ORYSJ</name>
<evidence type="ECO:0000250" key="1"/>
<evidence type="ECO:0000305" key="2"/>
<dbReference type="EC" id="1.15.1.1"/>
<dbReference type="EMBL" id="L19436">
    <property type="protein sequence ID" value="AAA62657.1"/>
    <property type="molecule type" value="mRNA"/>
</dbReference>
<dbReference type="EMBL" id="AB026725">
    <property type="protein sequence ID" value="BAA86897.1"/>
    <property type="molecule type" value="Genomic_DNA"/>
</dbReference>
<dbReference type="EMBL" id="L34038">
    <property type="protein sequence ID" value="AAA57130.1"/>
    <property type="molecule type" value="mRNA"/>
</dbReference>
<dbReference type="EMBL" id="GQ848046">
    <property type="protein sequence ID" value="ADM86859.1"/>
    <property type="molecule type" value="mRNA"/>
</dbReference>
<dbReference type="EMBL" id="AC134346">
    <property type="status" value="NOT_ANNOTATED_CDS"/>
    <property type="molecule type" value="Genomic_DNA"/>
</dbReference>
<dbReference type="EMBL" id="AP008211">
    <property type="protein sequence ID" value="BAF17109.1"/>
    <property type="molecule type" value="Genomic_DNA"/>
</dbReference>
<dbReference type="EMBL" id="AP014961">
    <property type="protein sequence ID" value="BAS93374.1"/>
    <property type="molecule type" value="Genomic_DNA"/>
</dbReference>
<dbReference type="EMBL" id="CM000142">
    <property type="protein sequence ID" value="EEE63257.1"/>
    <property type="molecule type" value="Genomic_DNA"/>
</dbReference>
<dbReference type="EMBL" id="AK104030">
    <property type="protein sequence ID" value="BAG96380.1"/>
    <property type="molecule type" value="mRNA"/>
</dbReference>
<dbReference type="EMBL" id="AK104160">
    <property type="protein sequence ID" value="BAG96463.1"/>
    <property type="molecule type" value="mRNA"/>
</dbReference>
<dbReference type="PIR" id="T04072">
    <property type="entry name" value="T04072"/>
</dbReference>
<dbReference type="PIR" id="T04312">
    <property type="entry name" value="T04312"/>
</dbReference>
<dbReference type="RefSeq" id="XP_015640127.1">
    <property type="nucleotide sequence ID" value="XM_015784641.1"/>
</dbReference>
<dbReference type="SMR" id="Q43008"/>
<dbReference type="FunCoup" id="Q43008">
    <property type="interactions" value="2229"/>
</dbReference>
<dbReference type="STRING" id="39947.Q43008"/>
<dbReference type="PaxDb" id="39947-Q43008"/>
<dbReference type="EnsemblPlants" id="Os05t0323900-01">
    <property type="protein sequence ID" value="Os05t0323900-01"/>
    <property type="gene ID" value="Os05g0323900"/>
</dbReference>
<dbReference type="Gramene" id="Os05t0323900-01">
    <property type="protein sequence ID" value="Os05t0323900-01"/>
    <property type="gene ID" value="Os05g0323900"/>
</dbReference>
<dbReference type="KEGG" id="dosa:Os05g0323900"/>
<dbReference type="eggNOG" id="KOG0876">
    <property type="taxonomic scope" value="Eukaryota"/>
</dbReference>
<dbReference type="HOGENOM" id="CLU_031625_2_1_1"/>
<dbReference type="InParanoid" id="Q43008"/>
<dbReference type="OMA" id="DSLINWD"/>
<dbReference type="OrthoDB" id="239262at2759"/>
<dbReference type="PlantReactome" id="R-OSA-1119403">
    <property type="pathway name" value="Removal of superoxide radicals"/>
</dbReference>
<dbReference type="Proteomes" id="UP000000763">
    <property type="component" value="Chromosome 5"/>
</dbReference>
<dbReference type="Proteomes" id="UP000007752">
    <property type="component" value="Chromosome 5"/>
</dbReference>
<dbReference type="Proteomes" id="UP000059680">
    <property type="component" value="Chromosome 5"/>
</dbReference>
<dbReference type="GO" id="GO:0005759">
    <property type="term" value="C:mitochondrial matrix"/>
    <property type="evidence" value="ECO:0007669"/>
    <property type="project" value="UniProtKB-SubCell"/>
</dbReference>
<dbReference type="GO" id="GO:0005739">
    <property type="term" value="C:mitochondrion"/>
    <property type="evidence" value="ECO:0000318"/>
    <property type="project" value="GO_Central"/>
</dbReference>
<dbReference type="GO" id="GO:0030145">
    <property type="term" value="F:manganese ion binding"/>
    <property type="evidence" value="ECO:0000318"/>
    <property type="project" value="GO_Central"/>
</dbReference>
<dbReference type="GO" id="GO:0004784">
    <property type="term" value="F:superoxide dismutase activity"/>
    <property type="evidence" value="ECO:0000318"/>
    <property type="project" value="GO_Central"/>
</dbReference>
<dbReference type="FunFam" id="1.10.287.990:FF:000001">
    <property type="entry name" value="Superoxide dismutase"/>
    <property type="match status" value="1"/>
</dbReference>
<dbReference type="FunFam" id="3.55.40.20:FF:000002">
    <property type="entry name" value="Superoxide dismutase"/>
    <property type="match status" value="1"/>
</dbReference>
<dbReference type="Gene3D" id="1.10.287.990">
    <property type="entry name" value="Fe,Mn superoxide dismutase (SOD) domain"/>
    <property type="match status" value="1"/>
</dbReference>
<dbReference type="Gene3D" id="3.55.40.20">
    <property type="entry name" value="Iron/manganese superoxide dismutase, C-terminal domain"/>
    <property type="match status" value="1"/>
</dbReference>
<dbReference type="InterPro" id="IPR050265">
    <property type="entry name" value="Fe/Mn_Superoxide_Dismutase"/>
</dbReference>
<dbReference type="InterPro" id="IPR001189">
    <property type="entry name" value="Mn/Fe_SOD"/>
</dbReference>
<dbReference type="InterPro" id="IPR019833">
    <property type="entry name" value="Mn/Fe_SOD_BS"/>
</dbReference>
<dbReference type="InterPro" id="IPR019832">
    <property type="entry name" value="Mn/Fe_SOD_C"/>
</dbReference>
<dbReference type="InterPro" id="IPR019831">
    <property type="entry name" value="Mn/Fe_SOD_N"/>
</dbReference>
<dbReference type="InterPro" id="IPR036324">
    <property type="entry name" value="Mn/Fe_SOD_N_sf"/>
</dbReference>
<dbReference type="InterPro" id="IPR036314">
    <property type="entry name" value="SOD_C_sf"/>
</dbReference>
<dbReference type="PANTHER" id="PTHR11404">
    <property type="entry name" value="SUPEROXIDE DISMUTASE 2"/>
    <property type="match status" value="1"/>
</dbReference>
<dbReference type="PANTHER" id="PTHR11404:SF6">
    <property type="entry name" value="SUPEROXIDE DISMUTASE [MN], MITOCHONDRIAL"/>
    <property type="match status" value="1"/>
</dbReference>
<dbReference type="Pfam" id="PF02777">
    <property type="entry name" value="Sod_Fe_C"/>
    <property type="match status" value="1"/>
</dbReference>
<dbReference type="Pfam" id="PF00081">
    <property type="entry name" value="Sod_Fe_N"/>
    <property type="match status" value="1"/>
</dbReference>
<dbReference type="PIRSF" id="PIRSF000349">
    <property type="entry name" value="SODismutase"/>
    <property type="match status" value="1"/>
</dbReference>
<dbReference type="PRINTS" id="PR01703">
    <property type="entry name" value="MNSODISMTASE"/>
</dbReference>
<dbReference type="SUPFAM" id="SSF54719">
    <property type="entry name" value="Fe,Mn superoxide dismutase (SOD), C-terminal domain"/>
    <property type="match status" value="1"/>
</dbReference>
<dbReference type="SUPFAM" id="SSF46609">
    <property type="entry name" value="Fe,Mn superoxide dismutase (SOD), N-terminal domain"/>
    <property type="match status" value="1"/>
</dbReference>
<dbReference type="PROSITE" id="PS00088">
    <property type="entry name" value="SOD_MN"/>
    <property type="match status" value="1"/>
</dbReference>
<reference key="1">
    <citation type="journal article" date="1993" name="Plant Physiol.">
        <title>Cloning and sequencing analysis of a complementary DNA for manganese-superoxide dismutase from rice (Oryza sativa L.).</title>
        <authorList>
            <person name="Sakamoto A."/>
            <person name="Nosaka Y."/>
            <person name="Tanaka K."/>
        </authorList>
    </citation>
    <scope>NUCLEOTIDE SEQUENCE [MRNA]</scope>
    <source>
        <strain>cv. Nipponbare</strain>
    </source>
</reference>
<reference key="2">
    <citation type="online journal article" date="1999" name="Plant Gene Register">
        <title>Cloning and characterization of manganese-superoxide dismutase gene from rice.</title>
        <authorList>
            <person name="Kaminaka H."/>
            <person name="Yokoi H."/>
            <person name="Nosaka Y."/>
            <person name="Sakamoto A."/>
            <person name="Morita S."/>
            <person name="Masumura T."/>
            <person name="Tanaka K."/>
        </authorList>
        <locator>PGR99-170</locator>
    </citation>
    <scope>NUCLEOTIDE SEQUENCE [GENOMIC DNA]</scope>
    <source>
        <strain>cv. Nipponbare</strain>
    </source>
</reference>
<reference key="3">
    <citation type="submission" date="1994-12" db="EMBL/GenBank/DDBJ databases">
        <title>Rice manganese superoxide dismutase are encoded by multigene family.</title>
        <authorList>
            <person name="Pan S.M."/>
            <person name="Chen J.C."/>
        </authorList>
    </citation>
    <scope>NUCLEOTIDE SEQUENCE [MRNA]</scope>
    <source>
        <tissue>Etiolated shoot</tissue>
    </source>
</reference>
<reference key="4">
    <citation type="submission" date="2009-08" db="EMBL/GenBank/DDBJ databases">
        <title>Structural and expression analysis of germinating seed genes in Oryza sativa L.</title>
        <authorList>
            <person name="Yoon U.H."/>
            <person name="Kim Y.H."/>
        </authorList>
    </citation>
    <scope>NUCLEOTIDE SEQUENCE [MRNA]</scope>
    <source>
        <tissue>Seed</tissue>
    </source>
</reference>
<reference key="5">
    <citation type="journal article" date="2005" name="Mol. Genet. Genomics">
        <title>A fine physical map of the rice chromosome 5.</title>
        <authorList>
            <person name="Cheng C.-H."/>
            <person name="Chung M.C."/>
            <person name="Liu S.-M."/>
            <person name="Chen S.-K."/>
            <person name="Kao F.Y."/>
            <person name="Lin S.-J."/>
            <person name="Hsiao S.-H."/>
            <person name="Tseng I.C."/>
            <person name="Hsing Y.-I.C."/>
            <person name="Wu H.-P."/>
            <person name="Chen C.-S."/>
            <person name="Shaw J.-F."/>
            <person name="Wu J."/>
            <person name="Matsumoto T."/>
            <person name="Sasaki T."/>
            <person name="Chen H.-C."/>
            <person name="Chow T.-Y."/>
        </authorList>
    </citation>
    <scope>NUCLEOTIDE SEQUENCE [LARGE SCALE GENOMIC DNA]</scope>
    <source>
        <strain>cv. Nipponbare</strain>
    </source>
</reference>
<reference key="6">
    <citation type="journal article" date="2005" name="Nature">
        <title>The map-based sequence of the rice genome.</title>
        <authorList>
            <consortium name="International rice genome sequencing project (IRGSP)"/>
        </authorList>
    </citation>
    <scope>NUCLEOTIDE SEQUENCE [LARGE SCALE GENOMIC DNA]</scope>
    <source>
        <strain>cv. Nipponbare</strain>
    </source>
</reference>
<reference key="7">
    <citation type="journal article" date="2008" name="Nucleic Acids Res.">
        <title>The rice annotation project database (RAP-DB): 2008 update.</title>
        <authorList>
            <consortium name="The rice annotation project (RAP)"/>
        </authorList>
    </citation>
    <scope>GENOME REANNOTATION</scope>
    <source>
        <strain>cv. Nipponbare</strain>
    </source>
</reference>
<reference key="8">
    <citation type="journal article" date="2013" name="Rice">
        <title>Improvement of the Oryza sativa Nipponbare reference genome using next generation sequence and optical map data.</title>
        <authorList>
            <person name="Kawahara Y."/>
            <person name="de la Bastide M."/>
            <person name="Hamilton J.P."/>
            <person name="Kanamori H."/>
            <person name="McCombie W.R."/>
            <person name="Ouyang S."/>
            <person name="Schwartz D.C."/>
            <person name="Tanaka T."/>
            <person name="Wu J."/>
            <person name="Zhou S."/>
            <person name="Childs K.L."/>
            <person name="Davidson R.M."/>
            <person name="Lin H."/>
            <person name="Quesada-Ocampo L."/>
            <person name="Vaillancourt B."/>
            <person name="Sakai H."/>
            <person name="Lee S.S."/>
            <person name="Kim J."/>
            <person name="Numa H."/>
            <person name="Itoh T."/>
            <person name="Buell C.R."/>
            <person name="Matsumoto T."/>
        </authorList>
    </citation>
    <scope>GENOME REANNOTATION</scope>
    <source>
        <strain>cv. Nipponbare</strain>
    </source>
</reference>
<reference key="9">
    <citation type="journal article" date="2005" name="PLoS Biol.">
        <title>The genomes of Oryza sativa: a history of duplications.</title>
        <authorList>
            <person name="Yu J."/>
            <person name="Wang J."/>
            <person name="Lin W."/>
            <person name="Li S."/>
            <person name="Li H."/>
            <person name="Zhou J."/>
            <person name="Ni P."/>
            <person name="Dong W."/>
            <person name="Hu S."/>
            <person name="Zeng C."/>
            <person name="Zhang J."/>
            <person name="Zhang Y."/>
            <person name="Li R."/>
            <person name="Xu Z."/>
            <person name="Li S."/>
            <person name="Li X."/>
            <person name="Zheng H."/>
            <person name="Cong L."/>
            <person name="Lin L."/>
            <person name="Yin J."/>
            <person name="Geng J."/>
            <person name="Li G."/>
            <person name="Shi J."/>
            <person name="Liu J."/>
            <person name="Lv H."/>
            <person name="Li J."/>
            <person name="Wang J."/>
            <person name="Deng Y."/>
            <person name="Ran L."/>
            <person name="Shi X."/>
            <person name="Wang X."/>
            <person name="Wu Q."/>
            <person name="Li C."/>
            <person name="Ren X."/>
            <person name="Wang J."/>
            <person name="Wang X."/>
            <person name="Li D."/>
            <person name="Liu D."/>
            <person name="Zhang X."/>
            <person name="Ji Z."/>
            <person name="Zhao W."/>
            <person name="Sun Y."/>
            <person name="Zhang Z."/>
            <person name="Bao J."/>
            <person name="Han Y."/>
            <person name="Dong L."/>
            <person name="Ji J."/>
            <person name="Chen P."/>
            <person name="Wu S."/>
            <person name="Liu J."/>
            <person name="Xiao Y."/>
            <person name="Bu D."/>
            <person name="Tan J."/>
            <person name="Yang L."/>
            <person name="Ye C."/>
            <person name="Zhang J."/>
            <person name="Xu J."/>
            <person name="Zhou Y."/>
            <person name="Yu Y."/>
            <person name="Zhang B."/>
            <person name="Zhuang S."/>
            <person name="Wei H."/>
            <person name="Liu B."/>
            <person name="Lei M."/>
            <person name="Yu H."/>
            <person name="Li Y."/>
            <person name="Xu H."/>
            <person name="Wei S."/>
            <person name="He X."/>
            <person name="Fang L."/>
            <person name="Zhang Z."/>
            <person name="Zhang Y."/>
            <person name="Huang X."/>
            <person name="Su Z."/>
            <person name="Tong W."/>
            <person name="Li J."/>
            <person name="Tong Z."/>
            <person name="Li S."/>
            <person name="Ye J."/>
            <person name="Wang L."/>
            <person name="Fang L."/>
            <person name="Lei T."/>
            <person name="Chen C.-S."/>
            <person name="Chen H.-C."/>
            <person name="Xu Z."/>
            <person name="Li H."/>
            <person name="Huang H."/>
            <person name="Zhang F."/>
            <person name="Xu H."/>
            <person name="Li N."/>
            <person name="Zhao C."/>
            <person name="Li S."/>
            <person name="Dong L."/>
            <person name="Huang Y."/>
            <person name="Li L."/>
            <person name="Xi Y."/>
            <person name="Qi Q."/>
            <person name="Li W."/>
            <person name="Zhang B."/>
            <person name="Hu W."/>
            <person name="Zhang Y."/>
            <person name="Tian X."/>
            <person name="Jiao Y."/>
            <person name="Liang X."/>
            <person name="Jin J."/>
            <person name="Gao L."/>
            <person name="Zheng W."/>
            <person name="Hao B."/>
            <person name="Liu S.-M."/>
            <person name="Wang W."/>
            <person name="Yuan L."/>
            <person name="Cao M."/>
            <person name="McDermott J."/>
            <person name="Samudrala R."/>
            <person name="Wang J."/>
            <person name="Wong G.K.-S."/>
            <person name="Yang H."/>
        </authorList>
    </citation>
    <scope>NUCLEOTIDE SEQUENCE [LARGE SCALE GENOMIC DNA]</scope>
    <source>
        <strain>cv. Nipponbare</strain>
    </source>
</reference>
<reference key="10">
    <citation type="journal article" date="2003" name="Science">
        <title>Collection, mapping, and annotation of over 28,000 cDNA clones from japonica rice.</title>
        <authorList>
            <consortium name="The rice full-length cDNA consortium"/>
        </authorList>
    </citation>
    <scope>NUCLEOTIDE SEQUENCE [LARGE SCALE MRNA]</scope>
    <source>
        <strain>cv. Nipponbare</strain>
    </source>
</reference>
<protein>
    <recommendedName>
        <fullName>Superoxide dismutase [Mn], mitochondrial</fullName>
        <ecNumber>1.15.1.1</ecNumber>
    </recommendedName>
</protein>
<comment type="function">
    <text>Destroys superoxide anion radicals which are normally produced within the cells and which are toxic to biological systems.</text>
</comment>
<comment type="catalytic activity">
    <reaction>
        <text>2 superoxide + 2 H(+) = H2O2 + O2</text>
        <dbReference type="Rhea" id="RHEA:20696"/>
        <dbReference type="ChEBI" id="CHEBI:15378"/>
        <dbReference type="ChEBI" id="CHEBI:15379"/>
        <dbReference type="ChEBI" id="CHEBI:16240"/>
        <dbReference type="ChEBI" id="CHEBI:18421"/>
        <dbReference type="EC" id="1.15.1.1"/>
    </reaction>
</comment>
<comment type="cofactor">
    <cofactor evidence="1">
        <name>Mn(2+)</name>
        <dbReference type="ChEBI" id="CHEBI:29035"/>
    </cofactor>
    <text evidence="1">Binds 1 Mn(2+) ion per subunit.</text>
</comment>
<comment type="subunit">
    <text evidence="1">Homotetramer.</text>
</comment>
<comment type="subcellular location">
    <subcellularLocation>
        <location evidence="1">Mitochondrion matrix</location>
    </subcellularLocation>
</comment>
<comment type="similarity">
    <text evidence="2">Belongs to the iron/manganese superoxide dismutase family.</text>
</comment>